<name>STRK_STRGR</name>
<sequence length="449" mass="46343">MRFAYGRLPWRRGAVLGSALLVLVTAPAASTATERSGPAPARSVILLIGDGMGDAEITAARNYSVGAAGRLAMDTLDASGRRTTYAVDERGRPVYVTDSAAGATAWATGRRTVNGRVSKSHDTDRPMPTLLELARDRGYATGSVTTASVADATPAALTAHVTDRSCKGPADMAACPADTRAGGGEGSIAEQTVAARPDVLLGGGADHFAQTVTDGPFRGRTVTQQARAAGYQVVRDRTQLAAARPGRPVLGLFAPEYVPVEWTGPPAAPGGTAPQRCATRNPGRPAGTPDLAESTRAALDLLTARAHHRGAPGRGFFLQVEGASIDDRAHEADPCGQLGETLAFDRAVAAALDHAERHPRTLVIVTADHGHATQILPHDARPAGLSATLVTDEGGVMQLGYGTALPGETQEHTGVPVPVAARGPLADRVRGVQDNTSLFGTVTAALGLR</sequence>
<organism>
    <name type="scientific">Streptomyces griseus</name>
    <dbReference type="NCBI Taxonomy" id="1911"/>
    <lineage>
        <taxon>Bacteria</taxon>
        <taxon>Bacillati</taxon>
        <taxon>Actinomycetota</taxon>
        <taxon>Actinomycetes</taxon>
        <taxon>Kitasatosporales</taxon>
        <taxon>Streptomycetaceae</taxon>
        <taxon>Streptomyces</taxon>
    </lineage>
</organism>
<reference key="1">
    <citation type="journal article" date="1991" name="Mol. Gen. Genet.">
        <title>Genetics of streptomycin production in Streptomyces griseus: nucleotide sequence of five genes, strFGHIK, including a phosphatase gene.</title>
        <authorList>
            <person name="Mansouri K."/>
            <person name="Piepersberg W."/>
        </authorList>
    </citation>
    <scope>NUCLEOTIDE SEQUENCE [GENOMIC DNA]</scope>
    <source>
        <strain>N2-3-11</strain>
    </source>
</reference>
<proteinExistence type="inferred from homology"/>
<protein>
    <recommendedName>
        <fullName>Streptomycin-6-phosphate phosphatase</fullName>
        <ecNumber>3.1.3.39</ecNumber>
    </recommendedName>
</protein>
<gene>
    <name type="primary">strK</name>
</gene>
<comment type="function">
    <text>Specifically cleaves both streptomycin-6-phosphate and, more slowly, streptomycin-3''-phosphate during the biosynthesis of streptomycin.</text>
</comment>
<comment type="catalytic activity">
    <reaction>
        <text>streptomycin 6-phosphate + H2O = streptomycin + phosphate</text>
        <dbReference type="Rhea" id="RHEA:10688"/>
        <dbReference type="ChEBI" id="CHEBI:15377"/>
        <dbReference type="ChEBI" id="CHEBI:43474"/>
        <dbReference type="ChEBI" id="CHEBI:57787"/>
        <dbReference type="ChEBI" id="CHEBI:58007"/>
        <dbReference type="EC" id="3.1.3.39"/>
    </reaction>
</comment>
<comment type="cofactor">
    <cofactor evidence="1">
        <name>Mg(2+)</name>
        <dbReference type="ChEBI" id="CHEBI:18420"/>
    </cofactor>
    <text evidence="1">Binds 1 Mg(2+) ion.</text>
</comment>
<comment type="cofactor">
    <cofactor evidence="1">
        <name>Zn(2+)</name>
        <dbReference type="ChEBI" id="CHEBI:29105"/>
    </cofactor>
    <text evidence="1">Binds 2 Zn(2+) ions.</text>
</comment>
<comment type="pathway">
    <text>Antibiotic biosynthesis; streptomycin biosynthesis.</text>
</comment>
<comment type="subcellular location">
    <subcellularLocation>
        <location>Secreted</location>
    </subcellularLocation>
</comment>
<comment type="similarity">
    <text evidence="5">Belongs to the alkaline phosphatase family.</text>
</comment>
<feature type="signal peptide" evidence="2">
    <location>
        <begin position="1"/>
        <end position="32"/>
    </location>
</feature>
<feature type="chain" id="PRO_0000024016" description="Streptomycin-6-phosphate phosphatase">
    <location>
        <begin position="33"/>
        <end position="449"/>
    </location>
</feature>
<feature type="region of interest" description="Disordered" evidence="4">
    <location>
        <begin position="268"/>
        <end position="290"/>
    </location>
</feature>
<feature type="active site" description="Phosphoserine intermediate" evidence="3">
    <location>
        <position position="99"/>
    </location>
</feature>
<feature type="binding site" evidence="1">
    <location>
        <position position="50"/>
    </location>
    <ligand>
        <name>Mg(2+)</name>
        <dbReference type="ChEBI" id="CHEBI:18420"/>
    </ligand>
</feature>
<feature type="binding site" evidence="1">
    <location>
        <position position="50"/>
    </location>
    <ligand>
        <name>Zn(2+)</name>
        <dbReference type="ChEBI" id="CHEBI:29105"/>
        <label>2</label>
    </ligand>
</feature>
<feature type="binding site" evidence="1">
    <location>
        <position position="151"/>
    </location>
    <ligand>
        <name>Mg(2+)</name>
        <dbReference type="ChEBI" id="CHEBI:18420"/>
    </ligand>
</feature>
<feature type="binding site" evidence="1">
    <location>
        <position position="153"/>
    </location>
    <ligand>
        <name>Mg(2+)</name>
        <dbReference type="ChEBI" id="CHEBI:18420"/>
    </ligand>
</feature>
<feature type="binding site" evidence="1">
    <location>
        <position position="321"/>
    </location>
    <ligand>
        <name>Mg(2+)</name>
        <dbReference type="ChEBI" id="CHEBI:18420"/>
    </ligand>
</feature>
<feature type="binding site" evidence="1">
    <location>
        <position position="326"/>
    </location>
    <ligand>
        <name>Zn(2+)</name>
        <dbReference type="ChEBI" id="CHEBI:29105"/>
        <label>1</label>
    </ligand>
</feature>
<feature type="binding site" evidence="1">
    <location>
        <position position="330"/>
    </location>
    <ligand>
        <name>Zn(2+)</name>
        <dbReference type="ChEBI" id="CHEBI:29105"/>
        <label>1</label>
    </ligand>
</feature>
<feature type="binding site" evidence="1">
    <location>
        <position position="368"/>
    </location>
    <ligand>
        <name>Zn(2+)</name>
        <dbReference type="ChEBI" id="CHEBI:29105"/>
        <label>2</label>
    </ligand>
</feature>
<feature type="binding site" evidence="1">
    <location>
        <position position="369"/>
    </location>
    <ligand>
        <name>Zn(2+)</name>
        <dbReference type="ChEBI" id="CHEBI:29105"/>
        <label>2</label>
    </ligand>
</feature>
<feature type="binding site" evidence="1">
    <location>
        <position position="412"/>
    </location>
    <ligand>
        <name>Zn(2+)</name>
        <dbReference type="ChEBI" id="CHEBI:29105"/>
        <label>1</label>
    </ligand>
</feature>
<keyword id="KW-0045">Antibiotic biosynthesis</keyword>
<keyword id="KW-0378">Hydrolase</keyword>
<keyword id="KW-0460">Magnesium</keyword>
<keyword id="KW-0479">Metal-binding</keyword>
<keyword id="KW-0597">Phosphoprotein</keyword>
<keyword id="KW-0964">Secreted</keyword>
<keyword id="KW-0732">Signal</keyword>
<keyword id="KW-0759">Streptomycin biosynthesis</keyword>
<keyword id="KW-0862">Zinc</keyword>
<dbReference type="EC" id="3.1.3.39"/>
<dbReference type="EMBL" id="Y00459">
    <property type="protein sequence ID" value="CAA68522.1"/>
    <property type="molecule type" value="Genomic_DNA"/>
</dbReference>
<dbReference type="PIR" id="S17780">
    <property type="entry name" value="S17780"/>
</dbReference>
<dbReference type="RefSeq" id="WP_003970245.1">
    <property type="nucleotide sequence ID" value="NZ_UAVD01000010.1"/>
</dbReference>
<dbReference type="SMR" id="P09401"/>
<dbReference type="OMA" id="YQLMHNV"/>
<dbReference type="OrthoDB" id="9794455at2"/>
<dbReference type="BioCyc" id="MetaCyc:MONOMER-14015"/>
<dbReference type="UniPathway" id="UPA00066"/>
<dbReference type="GO" id="GO:0005576">
    <property type="term" value="C:extracellular region"/>
    <property type="evidence" value="ECO:0007669"/>
    <property type="project" value="UniProtKB-SubCell"/>
</dbReference>
<dbReference type="GO" id="GO:0004035">
    <property type="term" value="F:alkaline phosphatase activity"/>
    <property type="evidence" value="ECO:0007669"/>
    <property type="project" value="TreeGrafter"/>
</dbReference>
<dbReference type="GO" id="GO:0046872">
    <property type="term" value="F:metal ion binding"/>
    <property type="evidence" value="ECO:0007669"/>
    <property type="project" value="UniProtKB-KW"/>
</dbReference>
<dbReference type="GO" id="GO:0050301">
    <property type="term" value="F:streptomycin-6-phosphatase activity"/>
    <property type="evidence" value="ECO:0007669"/>
    <property type="project" value="UniProtKB-EC"/>
</dbReference>
<dbReference type="GO" id="GO:0019872">
    <property type="term" value="P:streptomycin biosynthetic process"/>
    <property type="evidence" value="ECO:0007669"/>
    <property type="project" value="UniProtKB-UniPathway"/>
</dbReference>
<dbReference type="CDD" id="cd16012">
    <property type="entry name" value="ALP"/>
    <property type="match status" value="1"/>
</dbReference>
<dbReference type="Gene3D" id="3.40.720.10">
    <property type="entry name" value="Alkaline Phosphatase, subunit A"/>
    <property type="match status" value="1"/>
</dbReference>
<dbReference type="InterPro" id="IPR001952">
    <property type="entry name" value="Alkaline_phosphatase"/>
</dbReference>
<dbReference type="InterPro" id="IPR018299">
    <property type="entry name" value="Alkaline_phosphatase_AS"/>
</dbReference>
<dbReference type="InterPro" id="IPR017850">
    <property type="entry name" value="Alkaline_phosphatase_core_sf"/>
</dbReference>
<dbReference type="PANTHER" id="PTHR11596">
    <property type="entry name" value="ALKALINE PHOSPHATASE"/>
    <property type="match status" value="1"/>
</dbReference>
<dbReference type="PANTHER" id="PTHR11596:SF5">
    <property type="entry name" value="ALKALINE PHOSPHATASE"/>
    <property type="match status" value="1"/>
</dbReference>
<dbReference type="Pfam" id="PF00245">
    <property type="entry name" value="Alk_phosphatase"/>
    <property type="match status" value="1"/>
</dbReference>
<dbReference type="PRINTS" id="PR00113">
    <property type="entry name" value="ALKPHPHTASE"/>
</dbReference>
<dbReference type="SMART" id="SM00098">
    <property type="entry name" value="alkPPc"/>
    <property type="match status" value="1"/>
</dbReference>
<dbReference type="SUPFAM" id="SSF53649">
    <property type="entry name" value="Alkaline phosphatase-like"/>
    <property type="match status" value="1"/>
</dbReference>
<dbReference type="PROSITE" id="PS00123">
    <property type="entry name" value="ALKALINE_PHOSPHATASE"/>
    <property type="match status" value="1"/>
</dbReference>
<evidence type="ECO:0000250" key="1"/>
<evidence type="ECO:0000255" key="2"/>
<evidence type="ECO:0000255" key="3">
    <source>
        <dbReference type="PROSITE-ProRule" id="PRU10042"/>
    </source>
</evidence>
<evidence type="ECO:0000256" key="4">
    <source>
        <dbReference type="SAM" id="MobiDB-lite"/>
    </source>
</evidence>
<evidence type="ECO:0000305" key="5"/>
<accession>P09401</accession>